<keyword id="KW-0002">3D-structure</keyword>
<keyword id="KW-0560">Oxidoreductase</keyword>
<keyword id="KW-1185">Reference proteome</keyword>
<proteinExistence type="evidence at protein level"/>
<comment type="function">
    <text evidence="1 2 3">Catalyzes glutathione (GSH)-dependent reduction of glutathionyl-hydroquinones (GS-HQs) to the corresponding hydroquinones. Can use a variety of GS-HQs as substrates, such as GS-p-hydroquinone (GS-HQ), GS-hydroxy-p-hydroquinone (GS-HHQ), GS-methyl-p-hydroquinone (GS-MHQ), GS-menadiol, and GS-trichloro-p-hydroquinone (GS-TriCH). Also displays GSH-dependent disulfide-bond reduction activity toward HED (2-hydroxyethyl disulfide), and is able to catalyze DMA (dimethylarsinate) reduction. Exhibits no GSH transferase activity with 1-chloro-2,4-dinitrobenzene (CDNB).</text>
</comment>
<comment type="catalytic activity">
    <reaction evidence="1 2 3">
        <text>2-(glutathione-S-yl)-hydroquinone + glutathione = hydroquinone + glutathione disulfide</text>
        <dbReference type="Rhea" id="RHEA:51936"/>
        <dbReference type="ChEBI" id="CHEBI:17594"/>
        <dbReference type="ChEBI" id="CHEBI:57925"/>
        <dbReference type="ChEBI" id="CHEBI:58297"/>
        <dbReference type="ChEBI" id="CHEBI:134616"/>
        <dbReference type="EC" id="1.8.5.7"/>
    </reaction>
</comment>
<comment type="biophysicochemical properties">
    <kinetics>
        <KM evidence="2 3">840 uM for glutathione</KM>
        <KM evidence="2 3">70 uM for GS-methyl-p-hydroquinone</KM>
        <KM evidence="2 3">390 uM for GS-p-hydroquinone</KM>
        <KM evidence="2 3">35 uM for GS-hydroxy-p-hydroquinone</KM>
        <KM evidence="2 3">4 uM for GS-menadiol</KM>
        <KM evidence="2 3">341 uM for GS-p-hydroquinone</KM>
        <Vmax evidence="2 3">10.8 umol/min/mg enzyme for the reduction of glutathionyl-para-hydroquinone</Vmax>
        <text evidence="2">kcat is 15, 14, 7.2 and 4.9 sec(-1) for the reduction of GS-MHQ, GS-HQ, GS-HHQ and GS-menadiol, respectively.</text>
    </kinetics>
</comment>
<comment type="subunit">
    <text evidence="3 4">Homodimer.</text>
</comment>
<comment type="miscellaneous">
    <text evidence="3">The reaction mechanism of reduction of GS-HQs is believed to involve a redox-active Cys that attacks the sulfhydryl of GS-hydroquinone, forming protein-glutathione mixed disulfide bond and releasing the hydroquinone. A GSH comes in to regenerate the protein and release GS-SG to complete the reaction.</text>
</comment>
<comment type="similarity">
    <text evidence="5">Belongs to the GST superfamily. Xi-class GSH transferase family.</text>
</comment>
<feature type="chain" id="PRO_0000169436" description="Glutathionyl-hydroquinone reductase YqjG">
    <location>
        <begin position="1"/>
        <end position="328"/>
    </location>
</feature>
<feature type="domain" description="GST C-terminal">
    <location>
        <begin position="172"/>
        <end position="296"/>
    </location>
</feature>
<feature type="region of interest" description="Dimerization">
    <location>
        <begin position="203"/>
        <end position="311"/>
    </location>
</feature>
<feature type="active site" description="Nucleophile" evidence="3">
    <location>
        <position position="63"/>
    </location>
</feature>
<feature type="active site" description="Proton donor/acceptor" evidence="6">
    <location>
        <position position="195"/>
    </location>
</feature>
<feature type="binding site" evidence="3 4">
    <location>
        <position position="96"/>
    </location>
    <ligand>
        <name>glutathione</name>
        <dbReference type="ChEBI" id="CHEBI:57925"/>
    </ligand>
</feature>
<feature type="binding site" evidence="3 4">
    <location>
        <begin position="130"/>
        <end position="133"/>
    </location>
    <ligand>
        <name>glutathione</name>
        <dbReference type="ChEBI" id="CHEBI:57925"/>
    </ligand>
</feature>
<feature type="binding site" evidence="3 4">
    <location>
        <begin position="148"/>
        <end position="149"/>
    </location>
    <ligand>
        <name>glutathione</name>
        <dbReference type="ChEBI" id="CHEBI:57925"/>
    </ligand>
</feature>
<feature type="site" description="Lowers pKa of active site Cys" evidence="5">
    <location>
        <position position="253"/>
    </location>
</feature>
<feature type="site" description="Lowers pKa of active site Cys" evidence="5">
    <location>
        <position position="296"/>
    </location>
</feature>
<feature type="mutagenesis site" description="Loss of GS-hydroquinone reductase activity." evidence="3">
    <original>C</original>
    <variation>A</variation>
    <location>
        <position position="63"/>
    </location>
</feature>
<feature type="mutagenesis site" description="46-fold reduction in GS-hydroquinone reductase activity." evidence="3">
    <original>Y</original>
    <variation>F</variation>
    <location>
        <position position="195"/>
    </location>
</feature>
<feature type="mutagenesis site" description="55-fold reduction in GS-hydroquinone reductase activity." evidence="3">
    <original>Y</original>
    <variation>F</variation>
    <location>
        <position position="253"/>
    </location>
</feature>
<feature type="mutagenesis site" description="22-fold reduction in GS-hydroquinone reductase activity." evidence="3">
    <original>Y</original>
    <variation>F</variation>
    <location>
        <position position="296"/>
    </location>
</feature>
<feature type="strand" evidence="11">
    <location>
        <begin position="4"/>
        <end position="7"/>
    </location>
</feature>
<feature type="strand" evidence="12">
    <location>
        <begin position="8"/>
        <end position="12"/>
    </location>
</feature>
<feature type="strand" evidence="11">
    <location>
        <begin position="18"/>
        <end position="20"/>
    </location>
</feature>
<feature type="helix" evidence="11">
    <location>
        <begin position="27"/>
        <end position="30"/>
    </location>
</feature>
<feature type="strand" evidence="11">
    <location>
        <begin position="35"/>
        <end position="38"/>
    </location>
</feature>
<feature type="strand" evidence="11">
    <location>
        <begin position="42"/>
        <end position="44"/>
    </location>
</feature>
<feature type="strand" evidence="11">
    <location>
        <begin position="54"/>
        <end position="59"/>
    </location>
</feature>
<feature type="helix" evidence="11">
    <location>
        <begin position="64"/>
        <end position="75"/>
    </location>
</feature>
<feature type="turn" evidence="11">
    <location>
        <begin position="79"/>
        <end position="81"/>
    </location>
</feature>
<feature type="strand" evidence="11">
    <location>
        <begin position="82"/>
        <end position="86"/>
    </location>
</feature>
<feature type="strand" evidence="12">
    <location>
        <begin position="88"/>
        <end position="92"/>
    </location>
</feature>
<feature type="strand" evidence="11">
    <location>
        <begin position="95"/>
        <end position="97"/>
    </location>
</feature>
<feature type="turn" evidence="11">
    <location>
        <begin position="109"/>
        <end position="111"/>
    </location>
</feature>
<feature type="helix" evidence="11">
    <location>
        <begin position="116"/>
        <end position="123"/>
    </location>
</feature>
<feature type="strand" evidence="11">
    <location>
        <begin position="135"/>
        <end position="138"/>
    </location>
</feature>
<feature type="turn" evidence="11">
    <location>
        <begin position="139"/>
        <end position="142"/>
    </location>
</feature>
<feature type="strand" evidence="11">
    <location>
        <begin position="143"/>
        <end position="146"/>
    </location>
</feature>
<feature type="helix" evidence="11">
    <location>
        <begin position="149"/>
        <end position="158"/>
    </location>
</feature>
<feature type="helix" evidence="11">
    <location>
        <begin position="161"/>
        <end position="163"/>
    </location>
</feature>
<feature type="helix" evidence="11">
    <location>
        <begin position="173"/>
        <end position="175"/>
    </location>
</feature>
<feature type="helix" evidence="11">
    <location>
        <begin position="176"/>
        <end position="189"/>
    </location>
</feature>
<feature type="turn" evidence="11">
    <location>
        <begin position="190"/>
        <end position="193"/>
    </location>
</feature>
<feature type="helix" evidence="11">
    <location>
        <begin position="194"/>
        <end position="198"/>
    </location>
</feature>
<feature type="helix" evidence="11">
    <location>
        <begin position="203"/>
        <end position="223"/>
    </location>
</feature>
<feature type="turn" evidence="11">
    <location>
        <begin position="224"/>
        <end position="226"/>
    </location>
</feature>
<feature type="strand" evidence="11">
    <location>
        <begin position="227"/>
        <end position="234"/>
    </location>
</feature>
<feature type="helix" evidence="11">
    <location>
        <begin position="237"/>
        <end position="249"/>
    </location>
</feature>
<feature type="turn" evidence="11">
    <location>
        <begin position="250"/>
        <end position="257"/>
    </location>
</feature>
<feature type="helix" evidence="11">
    <location>
        <begin position="264"/>
        <end position="266"/>
    </location>
</feature>
<feature type="helix" evidence="11">
    <location>
        <begin position="268"/>
        <end position="278"/>
    </location>
</feature>
<feature type="turn" evidence="11">
    <location>
        <begin position="281"/>
        <end position="283"/>
    </location>
</feature>
<feature type="helix" evidence="11">
    <location>
        <begin position="284"/>
        <end position="286"/>
    </location>
</feature>
<feature type="helix" evidence="11">
    <location>
        <begin position="289"/>
        <end position="299"/>
    </location>
</feature>
<feature type="turn" evidence="11">
    <location>
        <begin position="301"/>
        <end position="303"/>
    </location>
</feature>
<feature type="helix" evidence="11">
    <location>
        <begin position="323"/>
        <end position="326"/>
    </location>
</feature>
<sequence length="328" mass="37386">MGQLIDGVWHDTWYDTKSTGGKFQRSASAFRNWLTADGAPGPTGTGGFIAEKDRYHLYVSLACPWAHRTLIMRKLKGLEPFISVSVVNPLMLENGWTFDDSFPGATGDTLYQNEFLYQLYLHADPHYSGRVTVPVLWDKKNHTIVSNESAEIIRMFNTAFDALGAKAGDYYPPALQTKIDELNGWIYDTVNNGVYKAGFATSQEAYDEAVAKVFESLARLEQILGQHRYLTGNQLTEADIRLWTTLVRFDPVYVTHFKCDKHRISDYLNLYGFLRDIYQMPGIAETVNFDHIRNHYFRSHKTINPTGIISIGPWQDLDEPHGRDVRFG</sequence>
<evidence type="ECO:0000269" key="1">
    <source>
    </source>
</evidence>
<evidence type="ECO:0000269" key="2">
    <source>
    </source>
</evidence>
<evidence type="ECO:0000269" key="3">
    <source>
    </source>
</evidence>
<evidence type="ECO:0000269" key="4">
    <source ref="5"/>
</evidence>
<evidence type="ECO:0000305" key="5"/>
<evidence type="ECO:0000305" key="6">
    <source>
    </source>
</evidence>
<evidence type="ECO:0007744" key="7">
    <source>
        <dbReference type="PDB" id="3R3E"/>
    </source>
</evidence>
<evidence type="ECO:0007744" key="8">
    <source>
        <dbReference type="PDB" id="4G0I"/>
    </source>
</evidence>
<evidence type="ECO:0007744" key="9">
    <source>
        <dbReference type="PDB" id="4G0K"/>
    </source>
</evidence>
<evidence type="ECO:0007744" key="10">
    <source>
        <dbReference type="PDB" id="4G0L"/>
    </source>
</evidence>
<evidence type="ECO:0007829" key="11">
    <source>
        <dbReference type="PDB" id="4G0I"/>
    </source>
</evidence>
<evidence type="ECO:0007829" key="12">
    <source>
        <dbReference type="PDB" id="4G0L"/>
    </source>
</evidence>
<accession>P42620</accession>
<accession>Q2M9A4</accession>
<organism>
    <name type="scientific">Escherichia coli (strain K12)</name>
    <dbReference type="NCBI Taxonomy" id="83333"/>
    <lineage>
        <taxon>Bacteria</taxon>
        <taxon>Pseudomonadati</taxon>
        <taxon>Pseudomonadota</taxon>
        <taxon>Gammaproteobacteria</taxon>
        <taxon>Enterobacterales</taxon>
        <taxon>Enterobacteriaceae</taxon>
        <taxon>Escherichia</taxon>
    </lineage>
</organism>
<protein>
    <recommendedName>
        <fullName>Glutathionyl-hydroquinone reductase YqjG</fullName>
        <shortName>GS-HQR</shortName>
        <ecNumber evidence="1 2 3">1.8.5.7</ecNumber>
    </recommendedName>
</protein>
<dbReference type="EC" id="1.8.5.7" evidence="1 2 3"/>
<dbReference type="EMBL" id="U18997">
    <property type="protein sequence ID" value="AAA57906.1"/>
    <property type="molecule type" value="Genomic_DNA"/>
</dbReference>
<dbReference type="EMBL" id="U00096">
    <property type="protein sequence ID" value="AAC76137.1"/>
    <property type="molecule type" value="Genomic_DNA"/>
</dbReference>
<dbReference type="EMBL" id="AP009048">
    <property type="protein sequence ID" value="BAE77152.1"/>
    <property type="molecule type" value="Genomic_DNA"/>
</dbReference>
<dbReference type="PIR" id="C65099">
    <property type="entry name" value="C65099"/>
</dbReference>
<dbReference type="RefSeq" id="NP_417573.1">
    <property type="nucleotide sequence ID" value="NC_000913.3"/>
</dbReference>
<dbReference type="RefSeq" id="WP_000531213.1">
    <property type="nucleotide sequence ID" value="NZ_LN832404.1"/>
</dbReference>
<dbReference type="PDB" id="3R3E">
    <property type="method" value="X-ray"/>
    <property type="resolution" value="2.20 A"/>
    <property type="chains" value="A/B=1-328"/>
</dbReference>
<dbReference type="PDB" id="4G0I">
    <property type="method" value="X-ray"/>
    <property type="resolution" value="2.05 A"/>
    <property type="chains" value="A/B=1-328"/>
</dbReference>
<dbReference type="PDB" id="4G0K">
    <property type="method" value="X-ray"/>
    <property type="resolution" value="2.56 A"/>
    <property type="chains" value="A/B=1-328"/>
</dbReference>
<dbReference type="PDB" id="4G0L">
    <property type="method" value="X-ray"/>
    <property type="resolution" value="2.62 A"/>
    <property type="chains" value="A/B=1-328"/>
</dbReference>
<dbReference type="PDBsum" id="3R3E"/>
<dbReference type="PDBsum" id="4G0I"/>
<dbReference type="PDBsum" id="4G0K"/>
<dbReference type="PDBsum" id="4G0L"/>
<dbReference type="SMR" id="P42620"/>
<dbReference type="BioGRID" id="4260937">
    <property type="interactions" value="32"/>
</dbReference>
<dbReference type="BioGRID" id="851931">
    <property type="interactions" value="3"/>
</dbReference>
<dbReference type="DIP" id="DIP-12888N"/>
<dbReference type="FunCoup" id="P42620">
    <property type="interactions" value="546"/>
</dbReference>
<dbReference type="IntAct" id="P42620">
    <property type="interactions" value="13"/>
</dbReference>
<dbReference type="STRING" id="511145.b3102"/>
<dbReference type="jPOST" id="P42620"/>
<dbReference type="PaxDb" id="511145-b3102"/>
<dbReference type="EnsemblBacteria" id="AAC76137">
    <property type="protein sequence ID" value="AAC76137"/>
    <property type="gene ID" value="b3102"/>
</dbReference>
<dbReference type="GeneID" id="947615"/>
<dbReference type="KEGG" id="ecj:JW3073"/>
<dbReference type="KEGG" id="eco:b3102"/>
<dbReference type="KEGG" id="ecoc:C3026_16935"/>
<dbReference type="PATRIC" id="fig|511145.12.peg.3198"/>
<dbReference type="EchoBASE" id="EB2602"/>
<dbReference type="eggNOG" id="COG0435">
    <property type="taxonomic scope" value="Bacteria"/>
</dbReference>
<dbReference type="HOGENOM" id="CLU_037263_0_1_6"/>
<dbReference type="InParanoid" id="P42620"/>
<dbReference type="OMA" id="PWANRAI"/>
<dbReference type="OrthoDB" id="9769158at2"/>
<dbReference type="PhylomeDB" id="P42620"/>
<dbReference type="BioCyc" id="EcoCyc:G7616-MONOMER"/>
<dbReference type="BioCyc" id="MetaCyc:G7616-MONOMER"/>
<dbReference type="BRENDA" id="1.8.5.7">
    <property type="organism ID" value="2026"/>
</dbReference>
<dbReference type="EvolutionaryTrace" id="P42620"/>
<dbReference type="PRO" id="PR:P42620"/>
<dbReference type="Proteomes" id="UP000000625">
    <property type="component" value="Chromosome"/>
</dbReference>
<dbReference type="GO" id="GO:0005737">
    <property type="term" value="C:cytoplasm"/>
    <property type="evidence" value="ECO:0000318"/>
    <property type="project" value="GO_Central"/>
</dbReference>
<dbReference type="GO" id="GO:0004364">
    <property type="term" value="F:glutathione transferase activity"/>
    <property type="evidence" value="ECO:0000318"/>
    <property type="project" value="GO_Central"/>
</dbReference>
<dbReference type="GO" id="GO:0016672">
    <property type="term" value="F:oxidoreductase activity, acting on a sulfur group of donors, quinone or similar compound as acceptor"/>
    <property type="evidence" value="ECO:0000314"/>
    <property type="project" value="EcoCyc"/>
</dbReference>
<dbReference type="GO" id="GO:0042803">
    <property type="term" value="F:protein homodimerization activity"/>
    <property type="evidence" value="ECO:0000314"/>
    <property type="project" value="EcoCyc"/>
</dbReference>
<dbReference type="CDD" id="cd03190">
    <property type="entry name" value="GST_C_Omega_like"/>
    <property type="match status" value="1"/>
</dbReference>
<dbReference type="FunFam" id="1.20.1050.10:FF:000019">
    <property type="entry name" value="Glutathione S-transferase, omega"/>
    <property type="match status" value="1"/>
</dbReference>
<dbReference type="FunFam" id="3.40.30.10:FF:000058">
    <property type="entry name" value="Glutathione S-transferase, omega"/>
    <property type="match status" value="1"/>
</dbReference>
<dbReference type="Gene3D" id="1.20.1050.10">
    <property type="match status" value="1"/>
</dbReference>
<dbReference type="Gene3D" id="3.40.30.10">
    <property type="entry name" value="Glutaredoxin"/>
    <property type="match status" value="1"/>
</dbReference>
<dbReference type="InterPro" id="IPR010987">
    <property type="entry name" value="Glutathione-S-Trfase_C-like"/>
</dbReference>
<dbReference type="InterPro" id="IPR036282">
    <property type="entry name" value="Glutathione-S-Trfase_C_sf"/>
</dbReference>
<dbReference type="InterPro" id="IPR040079">
    <property type="entry name" value="Glutathione_S-Trfase"/>
</dbReference>
<dbReference type="InterPro" id="IPR004045">
    <property type="entry name" value="Glutathione_S-Trfase_N"/>
</dbReference>
<dbReference type="InterPro" id="IPR047047">
    <property type="entry name" value="GST_Omega-like_C"/>
</dbReference>
<dbReference type="InterPro" id="IPR016639">
    <property type="entry name" value="GST_Omega/GSH"/>
</dbReference>
<dbReference type="InterPro" id="IPR036249">
    <property type="entry name" value="Thioredoxin-like_sf"/>
</dbReference>
<dbReference type="PANTHER" id="PTHR32419:SF6">
    <property type="entry name" value="GLUTATHIONE S-TRANSFERASE OMEGA-LIKE 1-RELATED"/>
    <property type="match status" value="1"/>
</dbReference>
<dbReference type="PANTHER" id="PTHR32419">
    <property type="entry name" value="GLUTATHIONYL-HYDROQUINONE REDUCTASE"/>
    <property type="match status" value="1"/>
</dbReference>
<dbReference type="Pfam" id="PF13410">
    <property type="entry name" value="GST_C_2"/>
    <property type="match status" value="1"/>
</dbReference>
<dbReference type="Pfam" id="PF13409">
    <property type="entry name" value="GST_N_2"/>
    <property type="match status" value="1"/>
</dbReference>
<dbReference type="PIRSF" id="PIRSF015753">
    <property type="entry name" value="GST"/>
    <property type="match status" value="1"/>
</dbReference>
<dbReference type="SFLD" id="SFLDS00019">
    <property type="entry name" value="Glutathione_Transferase_(cytos"/>
    <property type="match status" value="1"/>
</dbReference>
<dbReference type="SFLD" id="SFLDG01206">
    <property type="entry name" value="Xi.1"/>
    <property type="match status" value="1"/>
</dbReference>
<dbReference type="SUPFAM" id="SSF47616">
    <property type="entry name" value="GST C-terminal domain-like"/>
    <property type="match status" value="1"/>
</dbReference>
<dbReference type="SUPFAM" id="SSF52833">
    <property type="entry name" value="Thioredoxin-like"/>
    <property type="match status" value="1"/>
</dbReference>
<dbReference type="PROSITE" id="PS50405">
    <property type="entry name" value="GST_CTER"/>
    <property type="match status" value="1"/>
</dbReference>
<gene>
    <name type="primary">yqjG</name>
    <name type="ordered locus">b3102</name>
    <name type="ordered locus">JW3073</name>
</gene>
<name>YQJG_ECOLI</name>
<reference key="1">
    <citation type="journal article" date="1997" name="Science">
        <title>The complete genome sequence of Escherichia coli K-12.</title>
        <authorList>
            <person name="Blattner F.R."/>
            <person name="Plunkett G. III"/>
            <person name="Bloch C.A."/>
            <person name="Perna N.T."/>
            <person name="Burland V."/>
            <person name="Riley M."/>
            <person name="Collado-Vides J."/>
            <person name="Glasner J.D."/>
            <person name="Rode C.K."/>
            <person name="Mayhew G.F."/>
            <person name="Gregor J."/>
            <person name="Davis N.W."/>
            <person name="Kirkpatrick H.A."/>
            <person name="Goeden M.A."/>
            <person name="Rose D.J."/>
            <person name="Mau B."/>
            <person name="Shao Y."/>
        </authorList>
    </citation>
    <scope>NUCLEOTIDE SEQUENCE [LARGE SCALE GENOMIC DNA]</scope>
    <source>
        <strain>K12 / MG1655 / ATCC 47076</strain>
    </source>
</reference>
<reference key="2">
    <citation type="journal article" date="2006" name="Mol. Syst. Biol.">
        <title>Highly accurate genome sequences of Escherichia coli K-12 strains MG1655 and W3110.</title>
        <authorList>
            <person name="Hayashi K."/>
            <person name="Morooka N."/>
            <person name="Yamamoto Y."/>
            <person name="Fujita K."/>
            <person name="Isono K."/>
            <person name="Choi S."/>
            <person name="Ohtsubo E."/>
            <person name="Baba T."/>
            <person name="Wanner B.L."/>
            <person name="Mori H."/>
            <person name="Horiuchi T."/>
        </authorList>
    </citation>
    <scope>NUCLEOTIDE SEQUENCE [LARGE SCALE GENOMIC DNA]</scope>
    <source>
        <strain>K12 / W3110 / ATCC 27325 / DSM 5911</strain>
    </source>
</reference>
<reference key="3">
    <citation type="journal article" date="2010" name="Biochem. J.">
        <title>S-Glutathionyl-(chloro)hydroquinone reductases: a novel class of glutathione transferases.</title>
        <authorList>
            <person name="Xun L."/>
            <person name="Belchik S.M."/>
            <person name="Xun R."/>
            <person name="Huang Y."/>
            <person name="Zhou H."/>
            <person name="Sanchez E."/>
            <person name="Kang C."/>
            <person name="Board P.G."/>
        </authorList>
    </citation>
    <scope>FUNCTION</scope>
    <scope>CATALYTIC ACTIVITY</scope>
    <scope>SUBSTRATE SPECIFICITY</scope>
</reference>
<reference key="4">
    <citation type="journal article" date="2012" name="Biochemistry">
        <title>Reduction of benzoquinones to hydroquinones via spontaneous reaction with glutathione and enzymatic reaction by S-glutathionyl-hydroquinone reductases.</title>
        <authorList>
            <person name="Lam L.K."/>
            <person name="Zhang Z."/>
            <person name="Board P.G."/>
            <person name="Xun L."/>
        </authorList>
    </citation>
    <scope>FUNCTION</scope>
    <scope>CATALYTIC ACTIVITY</scope>
    <scope>SUBSTRATE SPECIFICITY</scope>
    <scope>KINETIC PARAMETERS</scope>
</reference>
<reference evidence="7" key="5">
    <citation type="submission" date="2012-03" db="PDB data bank">
        <title>Crystal structure analysis of YqjG from Escherichia coli.</title>
        <authorList>
            <person name="Branch M.C."/>
            <person name="Cook P.D."/>
            <person name="Harp J.M."/>
            <person name="Armstrong R.N."/>
        </authorList>
    </citation>
    <scope>X-RAY CRYSTALLOGRAPHY (2.20 ANGSTROMS) IN COMPLEX WITH GLUTATHIONE</scope>
    <scope>SUBUNIT</scope>
    <source>
        <strain>K12</strain>
    </source>
</reference>
<reference evidence="8 9 10" key="6">
    <citation type="journal article" date="2012" name="J. Biol. Chem.">
        <title>Structural understanding of GSH-dependent reduction mechanism of glutathionyl-hydroquinone reductases.</title>
        <authorList>
            <person name="Green A.R."/>
            <person name="Hayes R.P."/>
            <person name="Xun L."/>
            <person name="Kang C."/>
        </authorList>
    </citation>
    <scope>X-RAY CRYSTALLOGRAPHY (2.05 ANGSTROMS) OF APOENZYME AND IN COMPLEXES WITH GLUTATHIONE AND GS-MENADIONE</scope>
    <scope>FUNCTION</scope>
    <scope>CATALYTIC ACTIVITY</scope>
    <scope>KINETIC PARAMETERS</scope>
    <scope>REACTION MECHANISM</scope>
    <scope>ACTIVE SITES</scope>
    <scope>SUBUNIT</scope>
    <scope>MUTAGENESIS OF CYS-63; TYR-195; TYR-253 AND TYR-296</scope>
</reference>